<dbReference type="EC" id="3.1.3.36" evidence="10 12"/>
<dbReference type="EMBL" id="AF009039">
    <property type="protein sequence ID" value="AAC51921.1"/>
    <property type="molecule type" value="mRNA"/>
</dbReference>
<dbReference type="EMBL" id="AF009040">
    <property type="protein sequence ID" value="AAC51922.1"/>
    <property type="molecule type" value="mRNA"/>
</dbReference>
<dbReference type="EMBL" id="AB020717">
    <property type="protein sequence ID" value="BAA74933.2"/>
    <property type="status" value="ALT_INIT"/>
    <property type="molecule type" value="mRNA"/>
</dbReference>
<dbReference type="EMBL" id="AP000275">
    <property type="status" value="NOT_ANNOTATED_CDS"/>
    <property type="molecule type" value="Genomic_DNA"/>
</dbReference>
<dbReference type="EMBL" id="AP000276">
    <property type="status" value="NOT_ANNOTATED_CDS"/>
    <property type="molecule type" value="Genomic_DNA"/>
</dbReference>
<dbReference type="EMBL" id="AP000277">
    <property type="status" value="NOT_ANNOTATED_CDS"/>
    <property type="molecule type" value="Genomic_DNA"/>
</dbReference>
<dbReference type="EMBL" id="AP000278">
    <property type="status" value="NOT_ANNOTATED_CDS"/>
    <property type="molecule type" value="Genomic_DNA"/>
</dbReference>
<dbReference type="EMBL" id="AP000279">
    <property type="status" value="NOT_ANNOTATED_CDS"/>
    <property type="molecule type" value="Genomic_DNA"/>
</dbReference>
<dbReference type="EMBL" id="BC098395">
    <property type="protein sequence ID" value="AAH98395.1"/>
    <property type="molecule type" value="mRNA"/>
</dbReference>
<dbReference type="CCDS" id="CCDS33540.3">
    <molecule id="O43426-2"/>
</dbReference>
<dbReference type="CCDS" id="CCDS54483.1">
    <molecule id="O43426-4"/>
</dbReference>
<dbReference type="RefSeq" id="NP_001153774.1">
    <molecule id="O43426-4"/>
    <property type="nucleotide sequence ID" value="NM_001160302.2"/>
</dbReference>
<dbReference type="RefSeq" id="NP_001153778.1">
    <property type="nucleotide sequence ID" value="NM_001160306.1"/>
</dbReference>
<dbReference type="RefSeq" id="NP_003886.3">
    <property type="nucleotide sequence ID" value="NM_003895.3"/>
</dbReference>
<dbReference type="RefSeq" id="NP_982271.3">
    <molecule id="O43426-2"/>
    <property type="nucleotide sequence ID" value="NM_203446.3"/>
</dbReference>
<dbReference type="RefSeq" id="XP_016883989.1">
    <property type="nucleotide sequence ID" value="XM_017028500.1"/>
</dbReference>
<dbReference type="RefSeq" id="XP_047297005.1">
    <molecule id="O43426-4"/>
    <property type="nucleotide sequence ID" value="XM_047441049.1"/>
</dbReference>
<dbReference type="RefSeq" id="XP_054180924.1">
    <molecule id="O43426-4"/>
    <property type="nucleotide sequence ID" value="XM_054324949.1"/>
</dbReference>
<dbReference type="PDB" id="1W80">
    <property type="method" value="X-ray"/>
    <property type="resolution" value="1.90 A"/>
    <property type="chains" value="P=1477-1488, Q=1458-1469"/>
</dbReference>
<dbReference type="PDB" id="2DNR">
    <property type="method" value="NMR"/>
    <property type="chains" value="A=894-971"/>
</dbReference>
<dbReference type="PDB" id="2VJ0">
    <property type="method" value="X-ray"/>
    <property type="resolution" value="1.60 A"/>
    <property type="chains" value="P=1477-1488"/>
</dbReference>
<dbReference type="PDB" id="7A0V">
    <property type="method" value="X-ray"/>
    <property type="resolution" value="2.30 A"/>
    <property type="chains" value="A/C/E=528-873"/>
</dbReference>
<dbReference type="PDBsum" id="1W80"/>
<dbReference type="PDBsum" id="2DNR"/>
<dbReference type="PDBsum" id="2VJ0"/>
<dbReference type="PDBsum" id="7A0V"/>
<dbReference type="SMR" id="O43426"/>
<dbReference type="BioGRID" id="114388">
    <property type="interactions" value="84"/>
</dbReference>
<dbReference type="ELM" id="O43426"/>
<dbReference type="FunCoup" id="O43426">
    <property type="interactions" value="1139"/>
</dbReference>
<dbReference type="IntAct" id="O43426">
    <property type="interactions" value="34"/>
</dbReference>
<dbReference type="MINT" id="O43426"/>
<dbReference type="STRING" id="9606.ENSP00000409667"/>
<dbReference type="ChEMBL" id="CHEMBL4523136"/>
<dbReference type="DrugCentral" id="O43426"/>
<dbReference type="DEPOD" id="SYNJ1"/>
<dbReference type="GlyCosmos" id="O43426">
    <property type="glycosylation" value="5 sites, 1 glycan"/>
</dbReference>
<dbReference type="GlyGen" id="O43426">
    <property type="glycosylation" value="8 sites, 1 O-linked glycan (7 sites)"/>
</dbReference>
<dbReference type="iPTMnet" id="O43426"/>
<dbReference type="MetOSite" id="O43426"/>
<dbReference type="PhosphoSitePlus" id="O43426"/>
<dbReference type="SwissPalm" id="O43426"/>
<dbReference type="BioMuta" id="SYNJ1"/>
<dbReference type="jPOST" id="O43426"/>
<dbReference type="MassIVE" id="O43426"/>
<dbReference type="PaxDb" id="9606-ENSP00000409667"/>
<dbReference type="PeptideAtlas" id="O43426"/>
<dbReference type="ProteomicsDB" id="48937">
    <molecule id="O43426-1"/>
</dbReference>
<dbReference type="ProteomicsDB" id="48938">
    <molecule id="O43426-2"/>
</dbReference>
<dbReference type="ProteomicsDB" id="48939">
    <molecule id="O43426-4"/>
</dbReference>
<dbReference type="ProteomicsDB" id="48940">
    <molecule id="O43426-5"/>
</dbReference>
<dbReference type="Pumba" id="O43426"/>
<dbReference type="Antibodypedia" id="2183">
    <property type="antibodies" value="159 antibodies from 28 providers"/>
</dbReference>
<dbReference type="DNASU" id="8867"/>
<dbReference type="Ensembl" id="ENST00000357345.7">
    <molecule id="O43426-4"/>
    <property type="protein sequence ID" value="ENSP00000349903.3"/>
    <property type="gene ID" value="ENSG00000159082.18"/>
</dbReference>
<dbReference type="Ensembl" id="ENST00000674204.1">
    <molecule id="O43426-2"/>
    <property type="protein sequence ID" value="ENSP00000501504.1"/>
    <property type="gene ID" value="ENSG00000159082.18"/>
</dbReference>
<dbReference type="Ensembl" id="ENST00000674308.1">
    <molecule id="O43426-1"/>
    <property type="protein sequence ID" value="ENSP00000501426.1"/>
    <property type="gene ID" value="ENSG00000159082.18"/>
</dbReference>
<dbReference type="Ensembl" id="ENST00000674351.1">
    <molecule id="O43426-2"/>
    <property type="protein sequence ID" value="ENSP00000501530.1"/>
    <property type="gene ID" value="ENSG00000159082.18"/>
</dbReference>
<dbReference type="GeneID" id="8867"/>
<dbReference type="KEGG" id="hsa:8867"/>
<dbReference type="MANE-Select" id="ENST00000674351.1">
    <molecule id="O43426-2"/>
    <property type="protein sequence ID" value="ENSP00000501530.1"/>
    <property type="RefSeq nucleotide sequence ID" value="NM_203446.3"/>
    <property type="RefSeq protein sequence ID" value="NP_982271.3"/>
</dbReference>
<dbReference type="UCSC" id="uc002yqf.2">
    <molecule id="O43426-1"/>
    <property type="organism name" value="human"/>
</dbReference>
<dbReference type="AGR" id="HGNC:11503"/>
<dbReference type="CTD" id="8867"/>
<dbReference type="DisGeNET" id="8867"/>
<dbReference type="GeneCards" id="SYNJ1"/>
<dbReference type="HGNC" id="HGNC:11503">
    <property type="gene designation" value="SYNJ1"/>
</dbReference>
<dbReference type="HPA" id="ENSG00000159082">
    <property type="expression patterns" value="Tissue enhanced (brain, retina)"/>
</dbReference>
<dbReference type="MalaCards" id="SYNJ1"/>
<dbReference type="MIM" id="604297">
    <property type="type" value="gene"/>
</dbReference>
<dbReference type="MIM" id="615530">
    <property type="type" value="phenotype"/>
</dbReference>
<dbReference type="MIM" id="617389">
    <property type="type" value="phenotype"/>
</dbReference>
<dbReference type="neXtProt" id="NX_O43426"/>
<dbReference type="OpenTargets" id="ENSG00000159082"/>
<dbReference type="Orphanet" id="391411">
    <property type="disease" value="Atypical juvenile parkinsonism"/>
</dbReference>
<dbReference type="Orphanet" id="442835">
    <property type="disease" value="Non-specific early-onset epileptic encephalopathy"/>
</dbReference>
<dbReference type="Orphanet" id="2828">
    <property type="disease" value="Young-onset Parkinson disease"/>
</dbReference>
<dbReference type="PharmGKB" id="PA36285"/>
<dbReference type="VEuPathDB" id="HostDB:ENSG00000159082"/>
<dbReference type="eggNOG" id="KOG0566">
    <property type="taxonomic scope" value="Eukaryota"/>
</dbReference>
<dbReference type="GeneTree" id="ENSGT00940000157964"/>
<dbReference type="InParanoid" id="O43426"/>
<dbReference type="OMA" id="FERHMSM"/>
<dbReference type="OrthoDB" id="1925875at2759"/>
<dbReference type="PAN-GO" id="O43426">
    <property type="GO annotations" value="8 GO annotations based on evolutionary models"/>
</dbReference>
<dbReference type="PhylomeDB" id="O43426"/>
<dbReference type="BioCyc" id="MetaCyc:HS08354-MONOMER"/>
<dbReference type="PathwayCommons" id="O43426"/>
<dbReference type="Reactome" id="R-HSA-1660499">
    <property type="pathway name" value="Synthesis of PIPs at the plasma membrane"/>
</dbReference>
<dbReference type="Reactome" id="R-HSA-1855183">
    <property type="pathway name" value="Synthesis of IP2, IP, and Ins in the cytosol"/>
</dbReference>
<dbReference type="Reactome" id="R-HSA-1855204">
    <property type="pathway name" value="Synthesis of IP3 and IP4 in the cytosol"/>
</dbReference>
<dbReference type="Reactome" id="R-HSA-8856828">
    <property type="pathway name" value="Clathrin-mediated endocytosis"/>
</dbReference>
<dbReference type="SignaLink" id="O43426"/>
<dbReference type="SIGNOR" id="O43426"/>
<dbReference type="BioGRID-ORCS" id="8867">
    <property type="hits" value="9 hits in 1169 CRISPR screens"/>
</dbReference>
<dbReference type="CD-CODE" id="FB4E32DD">
    <property type="entry name" value="Presynaptic clusters and postsynaptic densities"/>
</dbReference>
<dbReference type="ChiTaRS" id="SYNJ1">
    <property type="organism name" value="human"/>
</dbReference>
<dbReference type="EvolutionaryTrace" id="O43426"/>
<dbReference type="GenomeRNAi" id="8867"/>
<dbReference type="Pharos" id="O43426">
    <property type="development level" value="Tchem"/>
</dbReference>
<dbReference type="PRO" id="PR:O43426"/>
<dbReference type="Proteomes" id="UP000005640">
    <property type="component" value="Chromosome 21"/>
</dbReference>
<dbReference type="RNAct" id="O43426">
    <property type="molecule type" value="protein"/>
</dbReference>
<dbReference type="Bgee" id="ENSG00000159082">
    <property type="expression patterns" value="Expressed in Brodmann (1909) area 23 and 193 other cell types or tissues"/>
</dbReference>
<dbReference type="ExpressionAtlas" id="O43426">
    <property type="expression patterns" value="baseline and differential"/>
</dbReference>
<dbReference type="GO" id="GO:0030132">
    <property type="term" value="C:clathrin coat of coated pit"/>
    <property type="evidence" value="ECO:0000250"/>
    <property type="project" value="BHF-UCL"/>
</dbReference>
<dbReference type="GO" id="GO:0005737">
    <property type="term" value="C:cytoplasm"/>
    <property type="evidence" value="ECO:0000318"/>
    <property type="project" value="GO_Central"/>
</dbReference>
<dbReference type="GO" id="GO:0005829">
    <property type="term" value="C:cytosol"/>
    <property type="evidence" value="ECO:0000304"/>
    <property type="project" value="Reactome"/>
</dbReference>
<dbReference type="GO" id="GO:0016020">
    <property type="term" value="C:membrane"/>
    <property type="evidence" value="ECO:0000318"/>
    <property type="project" value="GO_Central"/>
</dbReference>
<dbReference type="GO" id="GO:0030117">
    <property type="term" value="C:membrane coat"/>
    <property type="evidence" value="ECO:0000250"/>
    <property type="project" value="ParkinsonsUK-UCL"/>
</dbReference>
<dbReference type="GO" id="GO:0048471">
    <property type="term" value="C:perinuclear region of cytoplasm"/>
    <property type="evidence" value="ECO:0000250"/>
    <property type="project" value="UniProtKB"/>
</dbReference>
<dbReference type="GO" id="GO:0098793">
    <property type="term" value="C:presynapse"/>
    <property type="evidence" value="ECO:0000314"/>
    <property type="project" value="ParkinsonsUK-UCL"/>
</dbReference>
<dbReference type="GO" id="GO:0097060">
    <property type="term" value="C:synaptic membrane"/>
    <property type="evidence" value="ECO:0000250"/>
    <property type="project" value="BHF-UCL"/>
</dbReference>
<dbReference type="GO" id="GO:0043195">
    <property type="term" value="C:terminal bouton"/>
    <property type="evidence" value="ECO:0000250"/>
    <property type="project" value="ParkinsonsUK-UCL"/>
</dbReference>
<dbReference type="GO" id="GO:0012506">
    <property type="term" value="C:vesicle membrane"/>
    <property type="evidence" value="ECO:0000250"/>
    <property type="project" value="ParkinsonsUK-UCL"/>
</dbReference>
<dbReference type="GO" id="GO:0052658">
    <property type="term" value="F:inositol-1,4,5-trisphosphate 5-phosphatase activity"/>
    <property type="evidence" value="ECO:0000318"/>
    <property type="project" value="GO_Central"/>
</dbReference>
<dbReference type="GO" id="GO:0034596">
    <property type="term" value="F:phosphatidylinositol phosphate 4-phosphatase activity"/>
    <property type="evidence" value="ECO:0000304"/>
    <property type="project" value="Reactome"/>
</dbReference>
<dbReference type="GO" id="GO:0034595">
    <property type="term" value="F:phosphatidylinositol phosphate 5-phosphatase activity"/>
    <property type="evidence" value="ECO:0000250"/>
    <property type="project" value="ParkinsonsUK-UCL"/>
</dbReference>
<dbReference type="GO" id="GO:0052629">
    <property type="term" value="F:phosphatidylinositol-3,5-bisphosphate 3-phosphatase activity"/>
    <property type="evidence" value="ECO:0000304"/>
    <property type="project" value="Reactome"/>
</dbReference>
<dbReference type="GO" id="GO:0043813">
    <property type="term" value="F:phosphatidylinositol-3,5-bisphosphate 5-phosphatase activity"/>
    <property type="evidence" value="ECO:0000304"/>
    <property type="project" value="Reactome"/>
</dbReference>
<dbReference type="GO" id="GO:0004438">
    <property type="term" value="F:phosphatidylinositol-3-phosphate phosphatase activity"/>
    <property type="evidence" value="ECO:0000314"/>
    <property type="project" value="ParkinsonsUK-UCL"/>
</dbReference>
<dbReference type="GO" id="GO:0004439">
    <property type="term" value="F:phosphatidylinositol-4,5-bisphosphate 5-phosphatase activity"/>
    <property type="evidence" value="ECO:0000314"/>
    <property type="project" value="ParkinsonsUK-UCL"/>
</dbReference>
<dbReference type="GO" id="GO:0043812">
    <property type="term" value="F:phosphatidylinositol-4-phosphate phosphatase activity"/>
    <property type="evidence" value="ECO:0000314"/>
    <property type="project" value="ParkinsonsUK-UCL"/>
</dbReference>
<dbReference type="GO" id="GO:0003723">
    <property type="term" value="F:RNA binding"/>
    <property type="evidence" value="ECO:0007669"/>
    <property type="project" value="UniProtKB-KW"/>
</dbReference>
<dbReference type="GO" id="GO:0043647">
    <property type="term" value="P:inositol phosphate metabolic process"/>
    <property type="evidence" value="ECO:0000304"/>
    <property type="project" value="Reactome"/>
</dbReference>
<dbReference type="GO" id="GO:0007612">
    <property type="term" value="P:learning"/>
    <property type="evidence" value="ECO:0000315"/>
    <property type="project" value="ParkinsonsUK-UCL"/>
</dbReference>
<dbReference type="GO" id="GO:0061024">
    <property type="term" value="P:membrane organization"/>
    <property type="evidence" value="ECO:0000304"/>
    <property type="project" value="Reactome"/>
</dbReference>
<dbReference type="GO" id="GO:0006836">
    <property type="term" value="P:neurotransmitter transport"/>
    <property type="evidence" value="ECO:0000250"/>
    <property type="project" value="ParkinsonsUK-UCL"/>
</dbReference>
<dbReference type="GO" id="GO:0006661">
    <property type="term" value="P:phosphatidylinositol biosynthetic process"/>
    <property type="evidence" value="ECO:0000304"/>
    <property type="project" value="Reactome"/>
</dbReference>
<dbReference type="GO" id="GO:0046856">
    <property type="term" value="P:phosphatidylinositol dephosphorylation"/>
    <property type="evidence" value="ECO:0000314"/>
    <property type="project" value="ParkinsonsUK-UCL"/>
</dbReference>
<dbReference type="GO" id="GO:0046488">
    <property type="term" value="P:phosphatidylinositol metabolic process"/>
    <property type="evidence" value="ECO:0000250"/>
    <property type="project" value="ParkinsonsUK-UCL"/>
</dbReference>
<dbReference type="GO" id="GO:1904980">
    <property type="term" value="P:positive regulation of endosome organization"/>
    <property type="evidence" value="ECO:0000315"/>
    <property type="project" value="ParkinsonsUK-UCL"/>
</dbReference>
<dbReference type="GO" id="GO:0048488">
    <property type="term" value="P:synaptic vesicle endocytosis"/>
    <property type="evidence" value="ECO:0000316"/>
    <property type="project" value="ParkinsonsUK-UCL"/>
</dbReference>
<dbReference type="GO" id="GO:0016082">
    <property type="term" value="P:synaptic vesicle priming"/>
    <property type="evidence" value="ECO:0000250"/>
    <property type="project" value="ParkinsonsUK-UCL"/>
</dbReference>
<dbReference type="GO" id="GO:0048489">
    <property type="term" value="P:synaptic vesicle transport"/>
    <property type="evidence" value="ECO:0000250"/>
    <property type="project" value="ParkinsonsUK-UCL"/>
</dbReference>
<dbReference type="GO" id="GO:0016191">
    <property type="term" value="P:synaptic vesicle uncoating"/>
    <property type="evidence" value="ECO:0000250"/>
    <property type="project" value="ParkinsonsUK-UCL"/>
</dbReference>
<dbReference type="CDD" id="cd09098">
    <property type="entry name" value="INPP5c_Synj1"/>
    <property type="match status" value="1"/>
</dbReference>
<dbReference type="CDD" id="cd12719">
    <property type="entry name" value="RRM_SYNJ1"/>
    <property type="match status" value="1"/>
</dbReference>
<dbReference type="FunFam" id="3.30.70.330:FF:000076">
    <property type="entry name" value="Synaptojanin-1 isoform 1"/>
    <property type="match status" value="1"/>
</dbReference>
<dbReference type="FunFam" id="3.60.10.10:FF:000003">
    <property type="entry name" value="Synaptojanin-1 isoform 1"/>
    <property type="match status" value="1"/>
</dbReference>
<dbReference type="Gene3D" id="3.30.70.330">
    <property type="match status" value="1"/>
</dbReference>
<dbReference type="Gene3D" id="3.60.10.10">
    <property type="entry name" value="Endonuclease/exonuclease/phosphatase"/>
    <property type="match status" value="1"/>
</dbReference>
<dbReference type="IDEAL" id="IID00691"/>
<dbReference type="InterPro" id="IPR036691">
    <property type="entry name" value="Endo/exonu/phosph_ase_sf"/>
</dbReference>
<dbReference type="InterPro" id="IPR046985">
    <property type="entry name" value="IP5"/>
</dbReference>
<dbReference type="InterPro" id="IPR000300">
    <property type="entry name" value="IPPc"/>
</dbReference>
<dbReference type="InterPro" id="IPR012677">
    <property type="entry name" value="Nucleotide-bd_a/b_plait_sf"/>
</dbReference>
<dbReference type="InterPro" id="IPR035979">
    <property type="entry name" value="RBD_domain_sf"/>
</dbReference>
<dbReference type="InterPro" id="IPR000504">
    <property type="entry name" value="RRM_dom"/>
</dbReference>
<dbReference type="InterPro" id="IPR002013">
    <property type="entry name" value="SAC_dom"/>
</dbReference>
<dbReference type="InterPro" id="IPR015047">
    <property type="entry name" value="SYNJ1/2_RRM"/>
</dbReference>
<dbReference type="InterPro" id="IPR034971">
    <property type="entry name" value="SYNJ1_RRM"/>
</dbReference>
<dbReference type="PANTHER" id="PTHR11200">
    <property type="entry name" value="INOSITOL 5-PHOSPHATASE"/>
    <property type="match status" value="1"/>
</dbReference>
<dbReference type="PANTHER" id="PTHR11200:SF158">
    <property type="entry name" value="SYNAPTOJANIN-1"/>
    <property type="match status" value="1"/>
</dbReference>
<dbReference type="Pfam" id="PF08952">
    <property type="entry name" value="DUF1866"/>
    <property type="match status" value="1"/>
</dbReference>
<dbReference type="Pfam" id="PF22669">
    <property type="entry name" value="Exo_endo_phos2"/>
    <property type="match status" value="1"/>
</dbReference>
<dbReference type="Pfam" id="PF02383">
    <property type="entry name" value="Syja_N"/>
    <property type="match status" value="1"/>
</dbReference>
<dbReference type="SMART" id="SM01165">
    <property type="entry name" value="DUF1866"/>
    <property type="match status" value="1"/>
</dbReference>
<dbReference type="SMART" id="SM00128">
    <property type="entry name" value="IPPc"/>
    <property type="match status" value="1"/>
</dbReference>
<dbReference type="SUPFAM" id="SSF56219">
    <property type="entry name" value="DNase I-like"/>
    <property type="match status" value="1"/>
</dbReference>
<dbReference type="SUPFAM" id="SSF54928">
    <property type="entry name" value="RNA-binding domain, RBD"/>
    <property type="match status" value="1"/>
</dbReference>
<dbReference type="PROSITE" id="PS50102">
    <property type="entry name" value="RRM"/>
    <property type="match status" value="1"/>
</dbReference>
<dbReference type="PROSITE" id="PS50275">
    <property type="entry name" value="SAC"/>
    <property type="match status" value="1"/>
</dbReference>
<name>SYNJ1_HUMAN</name>
<comment type="function">
    <text evidence="1 2 10 12">Phosphatase that acts on various phosphoinositides, including phosphatidylinositol 4-phosphate, phosphatidylinositol (4,5)-bisphosphate and phosphatidylinositol (3,4,5)-trisphosphate (PubMed:23804563, PubMed:27435091). Has a role in clathrin-mediated endocytosis (By similarity). Hydrolyzes PIP2 bound to actin regulatory proteins resulting in the rearrangement of actin filaments downstream of tyrosine kinase and ASH/GRB2 (By similarity).</text>
</comment>
<comment type="catalytic activity">
    <reaction evidence="10 12">
        <text>a 1,2-diacyl-sn-glycero-3-phospho-(1D-myo-inositol-4,5-bisphosphate) + H2O = a 1,2-diacyl-sn-glycero-3-phospho-(1D-myo-inositol 4-phosphate) + phosphate</text>
        <dbReference type="Rhea" id="RHEA:22764"/>
        <dbReference type="ChEBI" id="CHEBI:15377"/>
        <dbReference type="ChEBI" id="CHEBI:43474"/>
        <dbReference type="ChEBI" id="CHEBI:58178"/>
        <dbReference type="ChEBI" id="CHEBI:58456"/>
        <dbReference type="EC" id="3.1.3.36"/>
    </reaction>
</comment>
<comment type="subunit">
    <text evidence="1 2 3 8 9">Interacts with ASH/GRB2. Interacts with PACSIN1, PACSIN2 and PACSIN3 (By similarity). Interacts with AMPH, SH3GL1, SH3GL2 and SH3GL3 (PubMed:10542231). Interacts with MYO1E (via SH3 domain) (PubMed:17257598). Interacts with BIN1 and DNM1 (By similarity). Interacts with EPS15 (By similarity).</text>
</comment>
<comment type="interaction">
    <interactant intactId="EBI-2821539">
        <id>O43426</id>
    </interactant>
    <interactant intactId="EBI-602041">
        <id>Q15811</id>
        <label>ITSN1</label>
    </interactant>
    <organismsDiffer>false</organismsDiffer>
    <experiments>2</experiments>
</comment>
<comment type="subcellular location">
    <subcellularLocation>
        <location evidence="1">Cytoplasm</location>
        <location evidence="1">Perinuclear region</location>
    </subcellularLocation>
</comment>
<comment type="alternative products">
    <event type="alternative splicing"/>
    <isoform>
        <id>O43426-1</id>
        <name>1</name>
        <name>Synaptojanin-170</name>
        <sequence type="displayed"/>
    </isoform>
    <isoform>
        <id>O43426-2</id>
        <name>2</name>
        <name>Synaptojanin-145</name>
        <sequence type="described" ref="VSP_002682 VSP_002683"/>
    </isoform>
    <isoform>
        <id>O43426-4</id>
        <name>3</name>
        <sequence type="described" ref="VSP_041578 VSP_002682 VSP_002683"/>
    </isoform>
    <isoform>
        <id>O43426-5</id>
        <name>4</name>
        <sequence type="described" ref="VSP_035709 VSP_035710 VSP_035711"/>
    </isoform>
</comment>
<comment type="domain">
    <text evidence="2">Interacts with EPS15 (a clathrin coat-associated protein) via a C-terminal domain containing three Asn-Pro-Phe (NPF) repeats.</text>
</comment>
<comment type="domain">
    <text evidence="8">The C-terminal proline-rich region mediates binding to a variety of SH3 domain-containing proteins including AMPH, SH3GL1, SH3GL2 and SH3GL3.</text>
</comment>
<comment type="disease" evidence="10 11 13">
    <disease id="DI-03964">
        <name>Parkinson disease 20, early-onset</name>
        <acronym>PARK20</acronym>
        <description>An early-onset form of Parkinson disease, a complex neurodegenerative disorder characterized by bradykinesia, resting tremor, muscular rigidity and postural instability, as well as by a clinically significant response to treatment with levodopa. The pathology involves the loss of dopaminergic neurons in the substantia nigra and the presence of Lewy bodies (intraneuronal accumulations of aggregated proteins), in surviving neurons in various areas of the brain. PARK20 is characterized by young adult-onset of parkinsonism. Additional features may include seizures, cognitive decline, abnormal eye movements, and dystonia.</description>
        <dbReference type="MIM" id="615530"/>
    </disease>
    <text>The disease is caused by variants affecting the gene represented in this entry.</text>
</comment>
<comment type="disease" evidence="12">
    <disease id="DI-04961">
        <name>Developmental and epileptic encephalopathy 53</name>
        <acronym>DEE53</acronym>
        <description>A form of epileptic encephalopathy, a heterogeneous group of severe early-onset epilepsies characterized by refractory seizures, neurodevelopmental impairment, and poor prognosis. Development is normal prior to seizure onset, after which cognitive and motor delays become apparent. DEE53 inheritance is autosomal recessive.</description>
        <dbReference type="MIM" id="617389"/>
    </disease>
    <text>The disease is caused by variants affecting the gene represented in this entry.</text>
</comment>
<comment type="similarity">
    <text evidence="18">Belongs to the synaptojanin family.</text>
</comment>
<comment type="similarity">
    <text evidence="18">In the central section; belongs to the inositol 1,4,5-trisphosphate 5-phosphatase family.</text>
</comment>
<comment type="sequence caution" evidence="18">
    <conflict type="erroneous initiation">
        <sequence resource="EMBL-CDS" id="BAA74933"/>
    </conflict>
    <text>Extended N-terminus.</text>
</comment>
<protein>
    <recommendedName>
        <fullName>Synaptojanin-1</fullName>
        <ecNumber evidence="10 12">3.1.3.36</ecNumber>
    </recommendedName>
    <alternativeName>
        <fullName>Synaptic inositol 1,4,5-trisphosphate 5-phosphatase 1</fullName>
    </alternativeName>
</protein>
<organism>
    <name type="scientific">Homo sapiens</name>
    <name type="common">Human</name>
    <dbReference type="NCBI Taxonomy" id="9606"/>
    <lineage>
        <taxon>Eukaryota</taxon>
        <taxon>Metazoa</taxon>
        <taxon>Chordata</taxon>
        <taxon>Craniata</taxon>
        <taxon>Vertebrata</taxon>
        <taxon>Euteleostomi</taxon>
        <taxon>Mammalia</taxon>
        <taxon>Eutheria</taxon>
        <taxon>Euarchontoglires</taxon>
        <taxon>Primates</taxon>
        <taxon>Haplorrhini</taxon>
        <taxon>Catarrhini</taxon>
        <taxon>Hominidae</taxon>
        <taxon>Homo</taxon>
    </lineage>
</organism>
<reference key="1">
    <citation type="journal article" date="1997" name="FEBS Lett.">
        <title>Synaptojanin 1: localization on coated endocytic intermediates in nerve terminals and interaction of its 170 kDa isoform with Eps15.</title>
        <authorList>
            <person name="Haffner C."/>
            <person name="Takei K."/>
            <person name="Chen H."/>
            <person name="Ringstad N."/>
            <person name="Hudson A."/>
            <person name="Butler M.H."/>
            <person name="Salcini A.E."/>
            <person name="Di Fiore P.P."/>
            <person name="De Camilli P."/>
        </authorList>
    </citation>
    <scope>NUCLEOTIDE SEQUENCE [MRNA] (ISOFORMS 1 AND 2)</scope>
    <scope>VARIANT ARG-295</scope>
    <source>
        <tissue>Cerebellum</tissue>
    </source>
</reference>
<reference key="2">
    <citation type="journal article" date="1998" name="DNA Res.">
        <title>Prediction of the coding sequences of unidentified human genes. XII. The complete sequences of 100 new cDNA clones from brain which code for large proteins in vitro.</title>
        <authorList>
            <person name="Nagase T."/>
            <person name="Ishikawa K."/>
            <person name="Suyama M."/>
            <person name="Kikuno R."/>
            <person name="Hirosawa M."/>
            <person name="Miyajima N."/>
            <person name="Tanaka A."/>
            <person name="Kotani H."/>
            <person name="Nomura N."/>
            <person name="Ohara O."/>
        </authorList>
    </citation>
    <scope>NUCLEOTIDE SEQUENCE [LARGE SCALE MRNA] (ISOFORM 3)</scope>
    <source>
        <tissue>Brain</tissue>
    </source>
</reference>
<reference key="3">
    <citation type="journal article" date="2002" name="DNA Res.">
        <title>Construction of expression-ready cDNA clones for KIAA genes: manual curation of 330 KIAA cDNA clones.</title>
        <authorList>
            <person name="Nakajima D."/>
            <person name="Okazaki N."/>
            <person name="Yamakawa H."/>
            <person name="Kikuno R."/>
            <person name="Ohara O."/>
            <person name="Nagase T."/>
        </authorList>
    </citation>
    <scope>SEQUENCE REVISION</scope>
</reference>
<reference key="4">
    <citation type="journal article" date="2000" name="Nature">
        <title>The DNA sequence of human chromosome 21.</title>
        <authorList>
            <person name="Hattori M."/>
            <person name="Fujiyama A."/>
            <person name="Taylor T.D."/>
            <person name="Watanabe H."/>
            <person name="Yada T."/>
            <person name="Park H.-S."/>
            <person name="Toyoda A."/>
            <person name="Ishii K."/>
            <person name="Totoki Y."/>
            <person name="Choi D.-K."/>
            <person name="Groner Y."/>
            <person name="Soeda E."/>
            <person name="Ohki M."/>
            <person name="Takagi T."/>
            <person name="Sakaki Y."/>
            <person name="Taudien S."/>
            <person name="Blechschmidt K."/>
            <person name="Polley A."/>
            <person name="Menzel U."/>
            <person name="Delabar J."/>
            <person name="Kumpf K."/>
            <person name="Lehmann R."/>
            <person name="Patterson D."/>
            <person name="Reichwald K."/>
            <person name="Rump A."/>
            <person name="Schillhabel M."/>
            <person name="Schudy A."/>
            <person name="Zimmermann W."/>
            <person name="Rosenthal A."/>
            <person name="Kudoh J."/>
            <person name="Shibuya K."/>
            <person name="Kawasaki K."/>
            <person name="Asakawa S."/>
            <person name="Shintani A."/>
            <person name="Sasaki T."/>
            <person name="Nagamine K."/>
            <person name="Mitsuyama S."/>
            <person name="Antonarakis S.E."/>
            <person name="Minoshima S."/>
            <person name="Shimizu N."/>
            <person name="Nordsiek G."/>
            <person name="Hornischer K."/>
            <person name="Brandt P."/>
            <person name="Scharfe M."/>
            <person name="Schoen O."/>
            <person name="Desario A."/>
            <person name="Reichelt J."/>
            <person name="Kauer G."/>
            <person name="Bloecker H."/>
            <person name="Ramser J."/>
            <person name="Beck A."/>
            <person name="Klages S."/>
            <person name="Hennig S."/>
            <person name="Riesselmann L."/>
            <person name="Dagand E."/>
            <person name="Wehrmeyer S."/>
            <person name="Borzym K."/>
            <person name="Gardiner K."/>
            <person name="Nizetic D."/>
            <person name="Francis F."/>
            <person name="Lehrach H."/>
            <person name="Reinhardt R."/>
            <person name="Yaspo M.-L."/>
        </authorList>
    </citation>
    <scope>NUCLEOTIDE SEQUENCE [LARGE SCALE GENOMIC DNA]</scope>
</reference>
<reference key="5">
    <citation type="journal article" date="2004" name="Genome Res.">
        <title>The status, quality, and expansion of the NIH full-length cDNA project: the Mammalian Gene Collection (MGC).</title>
        <authorList>
            <consortium name="The MGC Project Team"/>
        </authorList>
    </citation>
    <scope>NUCLEOTIDE SEQUENCE [LARGE SCALE MRNA] (ISOFORM 4)</scope>
    <source>
        <tissue>Placenta</tissue>
    </source>
</reference>
<reference key="6">
    <citation type="journal article" date="1999" name="J. Biol. Chem.">
        <title>The SH3 domains of endophilin and amphiphysin bind to the proline-rich region of synaptojanin 1 at distinct sites that display an unconventional binding specificity.</title>
        <authorList>
            <person name="Cestra G."/>
            <person name="Castagnoli L."/>
            <person name="Dente L."/>
            <person name="Minenkova O."/>
            <person name="Petrelli A."/>
            <person name="Migone N."/>
            <person name="Hoffmueller U."/>
            <person name="Schneider-Mergener J."/>
            <person name="Cesareni G."/>
        </authorList>
    </citation>
    <scope>INTERACTION WITH AMPH; SH3GL1; SH3GL2 AND SH3GL3</scope>
    <scope>DOMAIN</scope>
</reference>
<reference key="7">
    <citation type="journal article" date="2007" name="FEBS Lett.">
        <title>Myosin 1E interacts with synaptojanin-1 and dynamin and is involved in endocytosis.</title>
        <authorList>
            <person name="Krendel M."/>
            <person name="Osterweil E.K."/>
            <person name="Mooseker M.S."/>
        </authorList>
    </citation>
    <scope>INTERACTION WITH MYO1E</scope>
</reference>
<reference key="8">
    <citation type="journal article" date="2008" name="Proc. Natl. Acad. Sci. U.S.A.">
        <title>A quantitative atlas of mitotic phosphorylation.</title>
        <authorList>
            <person name="Dephoure N."/>
            <person name="Zhou C."/>
            <person name="Villen J."/>
            <person name="Beausoleil S.A."/>
            <person name="Bakalarski C.E."/>
            <person name="Elledge S.J."/>
            <person name="Gygi S.P."/>
        </authorList>
    </citation>
    <scope>PHOSPHORYLATION [LARGE SCALE ANALYSIS] AT SER-830; THR-1220; SER-1551 AND SER-1565</scope>
    <scope>IDENTIFICATION BY MASS SPECTROMETRY [LARGE SCALE ANALYSIS]</scope>
    <source>
        <tissue>Cervix carcinoma</tissue>
    </source>
</reference>
<reference key="9">
    <citation type="journal article" date="2009" name="Sci. Signal.">
        <title>Quantitative phosphoproteomic analysis of T cell receptor signaling reveals system-wide modulation of protein-protein interactions.</title>
        <authorList>
            <person name="Mayya V."/>
            <person name="Lundgren D.H."/>
            <person name="Hwang S.-I."/>
            <person name="Rezaul K."/>
            <person name="Wu L."/>
            <person name="Eng J.K."/>
            <person name="Rodionov V."/>
            <person name="Han D.K."/>
        </authorList>
    </citation>
    <scope>PHOSPHORYLATION [LARGE SCALE ANALYSIS] AT SER-830</scope>
    <scope>IDENTIFICATION BY MASS SPECTROMETRY [LARGE SCALE ANALYSIS]</scope>
    <source>
        <tissue>Leukemic T-cell</tissue>
    </source>
</reference>
<reference key="10">
    <citation type="journal article" date="2010" name="Sci. Signal.">
        <title>Quantitative phosphoproteomics reveals widespread full phosphorylation site occupancy during mitosis.</title>
        <authorList>
            <person name="Olsen J.V."/>
            <person name="Vermeulen M."/>
            <person name="Santamaria A."/>
            <person name="Kumar C."/>
            <person name="Miller M.L."/>
            <person name="Jensen L.J."/>
            <person name="Gnad F."/>
            <person name="Cox J."/>
            <person name="Jensen T.S."/>
            <person name="Nigg E.A."/>
            <person name="Brunak S."/>
            <person name="Mann M."/>
        </authorList>
    </citation>
    <scope>PHOSPHORYLATION [LARGE SCALE ANALYSIS] AT SER-1318</scope>
    <scope>IDENTIFICATION BY MASS SPECTROMETRY [LARGE SCALE ANALYSIS]</scope>
    <source>
        <tissue>Cervix carcinoma</tissue>
    </source>
</reference>
<reference key="11">
    <citation type="journal article" date="2013" name="J. Proteome Res.">
        <title>Toward a comprehensive characterization of a human cancer cell phosphoproteome.</title>
        <authorList>
            <person name="Zhou H."/>
            <person name="Di Palma S."/>
            <person name="Preisinger C."/>
            <person name="Peng M."/>
            <person name="Polat A.N."/>
            <person name="Heck A.J."/>
            <person name="Mohammed S."/>
        </authorList>
    </citation>
    <scope>PHOSPHORYLATION [LARGE SCALE ANALYSIS] AT SER-830; THR-1220; SER-1292; SER-1345 AND SER-1565</scope>
    <scope>IDENTIFICATION BY MASS SPECTROMETRY [LARGE SCALE ANALYSIS]</scope>
    <source>
        <tissue>Cervix carcinoma</tissue>
        <tissue>Erythroleukemia</tissue>
    </source>
</reference>
<reference key="12">
    <citation type="journal article" date="2014" name="J. Proteomics">
        <title>An enzyme assisted RP-RPLC approach for in-depth analysis of human liver phosphoproteome.</title>
        <authorList>
            <person name="Bian Y."/>
            <person name="Song C."/>
            <person name="Cheng K."/>
            <person name="Dong M."/>
            <person name="Wang F."/>
            <person name="Huang J."/>
            <person name="Sun D."/>
            <person name="Wang L."/>
            <person name="Ye M."/>
            <person name="Zou H."/>
        </authorList>
    </citation>
    <scope>PHOSPHORYLATION [LARGE SCALE ANALYSIS] AT THR-1220</scope>
    <scope>IDENTIFICATION BY MASS SPECTROMETRY [LARGE SCALE ANALYSIS]</scope>
    <source>
        <tissue>Liver</tissue>
    </source>
</reference>
<reference key="13">
    <citation type="journal article" date="2016" name="Brain">
        <title>Loss of SYNJ1 dual phosphatase activity leads to early onset refractory seizures and progressive neurological decline.</title>
        <authorList>
            <consortium name="AR working group of the EuroEPINOMICS RES Consortium"/>
            <person name="Hardies K."/>
            <person name="Cai Y."/>
            <person name="Jardel C."/>
            <person name="Jansen A.C."/>
            <person name="Cao M."/>
            <person name="May P."/>
            <person name="Djemie T."/>
            <person name="Hachon Le Camus C."/>
            <person name="Keymolen K."/>
            <person name="Deconinck T."/>
            <person name="Bhambhani V."/>
            <person name="Long C."/>
            <person name="Sajan S.A."/>
            <person name="Helbig K.L."/>
            <person name="Suls A."/>
            <person name="Balling R."/>
            <person name="Helbig I."/>
            <person name="De Jonghe P."/>
            <person name="Depienne C."/>
            <person name="De Camilli P."/>
            <person name="Weckhuysen S."/>
        </authorList>
    </citation>
    <scope>FUNCTION</scope>
    <scope>INVOLVEMENT IN DEE53</scope>
    <scope>VARIANTS DEE53 CYS-849; ILE-981 AND SER-1018</scope>
    <scope>CHARACTERIZATION OF VARIANTS DEE53 CYS-849; ILE-981 AND SER-1018</scope>
    <scope>CATALYTIC ACTIVITY</scope>
</reference>
<reference key="14">
    <citation type="submission" date="2006-10" db="PDB data bank">
        <title>Solution structure of RNA binding domain in synaptojanin 1.</title>
        <authorList>
            <consortium name="RIKEN structural genomics initiative (RSGI)"/>
        </authorList>
    </citation>
    <scope>STRUCTURE BY NMR OF 894-971</scope>
</reference>
<reference key="15">
    <citation type="journal article" date="2013" name="Hum. Mutat.">
        <title>The Sac1 domain of SYNJ1 identified mutated in a family with early-onset progressive Parkinsonism with generalized seizures.</title>
        <authorList>
            <person name="Krebs C.E."/>
            <person name="Karkheiran S."/>
            <person name="Powell J.C."/>
            <person name="Cao M."/>
            <person name="Makarov V."/>
            <person name="Darvish H."/>
            <person name="Di Paolo G."/>
            <person name="Walker R.H."/>
            <person name="Shahidi G.A."/>
            <person name="Buxbaum J.D."/>
            <person name="De Camilli P."/>
            <person name="Yue Z."/>
            <person name="Paisan-Ruiz C."/>
        </authorList>
    </citation>
    <scope>VARIANT PARK20 GLN-219</scope>
    <scope>CHARACTERIZATION OF VARIANT PARK20 GLN-219</scope>
    <scope>FUNCTION</scope>
    <scope>CATALYTIC ACTIVITY</scope>
</reference>
<reference key="16">
    <citation type="journal article" date="2013" name="Hum. Mutat.">
        <title>Mutation in the SYNJ1 gene associated with autosomal recessive, early-onset Parkinsonism.</title>
        <authorList>
            <person name="Quadri M."/>
            <person name="Fang M."/>
            <person name="Picillo M."/>
            <person name="Olgiati S."/>
            <person name="Breedveld G.J."/>
            <person name="Graafland J."/>
            <person name="Wu B."/>
            <person name="Xu F."/>
            <person name="Erro R."/>
            <person name="Amboni M."/>
            <person name="Pappata S."/>
            <person name="Quarantelli M."/>
            <person name="Annesi G."/>
            <person name="Quattrone A."/>
            <person name="Chien H.F."/>
            <person name="Barbosa E.R."/>
            <person name="Oostra B.A."/>
            <person name="Barone P."/>
            <person name="Wang J."/>
            <person name="Bonifati V."/>
        </authorList>
    </citation>
    <scope>VARIANTS PARK20 GLN-219 AND ARG-1383</scope>
</reference>
<reference key="17">
    <citation type="journal article" date="2016" name="Parkinsonism Relat. Disord.">
        <title>Identification of a novel homozygous mutation Arg459Pro in SYNJ1 gene of an Indian family with autosomal recessive juvenile Parkinsonism.</title>
        <authorList>
            <person name="Kirola L."/>
            <person name="Behari M."/>
            <person name="Shishir C."/>
            <person name="Thelma B.K."/>
        </authorList>
    </citation>
    <scope>VARIANT PARK20 PRO-420</scope>
</reference>
<evidence type="ECO:0000250" key="1">
    <source>
        <dbReference type="UniProtKB" id="O18964"/>
    </source>
</evidence>
<evidence type="ECO:0000250" key="2">
    <source>
        <dbReference type="UniProtKB" id="Q62910"/>
    </source>
</evidence>
<evidence type="ECO:0000250" key="3">
    <source>
        <dbReference type="UniProtKB" id="Q8CHC4"/>
    </source>
</evidence>
<evidence type="ECO:0000255" key="4"/>
<evidence type="ECO:0000255" key="5">
    <source>
        <dbReference type="PROSITE-ProRule" id="PRU00176"/>
    </source>
</evidence>
<evidence type="ECO:0000255" key="6">
    <source>
        <dbReference type="PROSITE-ProRule" id="PRU00183"/>
    </source>
</evidence>
<evidence type="ECO:0000256" key="7">
    <source>
        <dbReference type="SAM" id="MobiDB-lite"/>
    </source>
</evidence>
<evidence type="ECO:0000269" key="8">
    <source>
    </source>
</evidence>
<evidence type="ECO:0000269" key="9">
    <source>
    </source>
</evidence>
<evidence type="ECO:0000269" key="10">
    <source>
    </source>
</evidence>
<evidence type="ECO:0000269" key="11">
    <source>
    </source>
</evidence>
<evidence type="ECO:0000269" key="12">
    <source>
    </source>
</evidence>
<evidence type="ECO:0000269" key="13">
    <source>
    </source>
</evidence>
<evidence type="ECO:0000269" key="14">
    <source>
    </source>
</evidence>
<evidence type="ECO:0000303" key="15">
    <source>
    </source>
</evidence>
<evidence type="ECO:0000303" key="16">
    <source>
    </source>
</evidence>
<evidence type="ECO:0000303" key="17">
    <source>
    </source>
</evidence>
<evidence type="ECO:0000305" key="18"/>
<evidence type="ECO:0007744" key="19">
    <source>
    </source>
</evidence>
<evidence type="ECO:0007744" key="20">
    <source>
    </source>
</evidence>
<evidence type="ECO:0007744" key="21">
    <source>
    </source>
</evidence>
<evidence type="ECO:0007744" key="22">
    <source>
    </source>
</evidence>
<evidence type="ECO:0007744" key="23">
    <source>
    </source>
</evidence>
<evidence type="ECO:0007829" key="24">
    <source>
        <dbReference type="PDB" id="2DNR"/>
    </source>
</evidence>
<evidence type="ECO:0007829" key="25">
    <source>
        <dbReference type="PDB" id="7A0V"/>
    </source>
</evidence>
<accession>O43426</accession>
<accession>O43425</accession>
<accession>O94984</accession>
<accession>Q4KMR1</accession>
<keyword id="KW-0002">3D-structure</keyword>
<keyword id="KW-0025">Alternative splicing</keyword>
<keyword id="KW-0963">Cytoplasm</keyword>
<keyword id="KW-0225">Disease variant</keyword>
<keyword id="KW-0254">Endocytosis</keyword>
<keyword id="KW-0887">Epilepsy</keyword>
<keyword id="KW-0378">Hydrolase</keyword>
<keyword id="KW-0443">Lipid metabolism</keyword>
<keyword id="KW-0488">Methylation</keyword>
<keyword id="KW-0523">Neurodegeneration</keyword>
<keyword id="KW-0907">Parkinson disease</keyword>
<keyword id="KW-0908">Parkinsonism</keyword>
<keyword id="KW-0597">Phosphoprotein</keyword>
<keyword id="KW-1267">Proteomics identification</keyword>
<keyword id="KW-1185">Reference proteome</keyword>
<keyword id="KW-0677">Repeat</keyword>
<keyword id="KW-0694">RNA-binding</keyword>
<sequence length="1573" mass="173103">MAFSKGFRIYHKLDPPPFSLIVETRHKEECLMFESGAVAVLSSAEKEAIKGTYSKVLDAYGLLGVLRLNLGDTMLHYLVLVTGCMSVGKIQESEVFRVTSTEFISLRIDSSDEDRISEVRKVLNSGNFYFAWSASGISLDLSLNAHRSMQEQTTDNRFFWNQSLHLHLKHYGVNCDDWLLRLMCGGVEIRTIYAAHKQAKACLISRLSCERAGTRFNVRGTNDDGHVANFVETEQVVYLDDSVSSFIQIRGSVPLFWEQPGLQVGSHRVRMSRGFEANAPAFDRHFRTLKNLYGKQIIVNLLGSKEGEHMLSKAFQSHLKASEHAADIQMVNFDYHQMVKGGKAEKLHSVLKPQVQKFLDYGFFYFNGSEVQRCQSGTVRTNCLDCLDRTNSVQAFLGLEMLAKQLEALGLAEKPQLVTRFQEVFRSMWSVNGDSISKIYAGTGALEGKAKLKDGARSVTRTIQNNFFDSSKQEAIDVLLLGNTLNSDLADKARALLTTGSLRVSEQTLQSASSKVLKSMCENFYKYSKPKKIRVCVGTWNVNGGKQFRSIAFKNQTLTDWLLDAPKLAGIQEFQDKRSKPTDIFAIGFEEMVELNAGNIVSASTTNQKLWAVELQKTISRDNKYVLLASEQLVGVCLFVFIRPQHAPFIRDVAVDTVKTGMGGATGNKGAVAIRMLFHTTSLCFVCSHFAAGQSQVKERNEDFIEIARKLSFPMGRMLFSHDYVFWCGDFNYRIDLPNEEVKELIRQQNWDSLIAGDQLINQKNAGQVFRGFLEGKVTFAPTYKYDLFSDDYDTSEKCRTPAWTDRVLWRRRKWPFDRSAEDLDLLNASFQDESKILYTWTPGTLLHYGRAELKTSDHRPVVALIDIDIFEVEAEERQNIYKEVIAVQGPPDGTVLVSIKSSLPENNFFDDALIDELLQQFASFGEVILIRFVEDKMWVTFLEGSSALNVLSLNGKELLNRTITIALKSPDWIKNLEEEMSLEKISIALPSSTSSTLLGEDAEVAADFDMEGDVDDYSAEVEELLPQHLQPSSSSGLGTSPSSSPRTSPCQSPTISEGPVPSLPIRPSRAPSRTPGPPSAQSSPIDAQPATPLPQKDPAQPLEPKRPPPPRPVAPPTRPAPPQRPPPPSGARSPAPTRKEFGGIGAPPSPGVARREMEAPKSPGTTRKDNIGRSQPSPQAGLAGPGPAGYSTARPTIPPRAGVISAPQSHARASAGRLTPESQSKTSETSKGSTFLPEPLKPQAAFPPQSSLPPPAQRLQEPLVPVAAPMPQSGPQPNLETPPQPPPRSRSSHSLPSEASSQPQVKTNGISDGKRESPLKIDPFEDLSFNLLAVSKAQLSVQTSPVPTPDPKRLIQLPSATQSNVLSSVSCMPTMPPIPARSQSQENMRSSPNPFITGLTRTNPFSDRTAAPGNPFRAKSEESEATSWFSKEEPVTISPFPSLQPLGHNKSRASSSLDGFKDSFDLQGQSTLKISNPKGWVTFEEEEDFGVKGKSKSACSDLLGNQPSSFSGSNLTLNDDWNKGTNVSFCVLPSRRPPPPPVPLLPPGTSPPVDPFTTLASKASPTLDFTER</sequence>
<feature type="chain" id="PRO_0000209730" description="Synaptojanin-1">
    <location>
        <begin position="1"/>
        <end position="1573"/>
    </location>
</feature>
<feature type="domain" description="SAC" evidence="6">
    <location>
        <begin position="119"/>
        <end position="442"/>
    </location>
</feature>
<feature type="domain" description="RRM" evidence="5">
    <location>
        <begin position="902"/>
        <end position="971"/>
    </location>
</feature>
<feature type="repeat" description="1">
    <location>
        <begin position="1396"/>
        <end position="1398"/>
    </location>
</feature>
<feature type="repeat" description="2">
    <location>
        <begin position="1406"/>
        <end position="1408"/>
    </location>
</feature>
<feature type="repeat" description="3">
    <location>
        <begin position="1417"/>
        <end position="1419"/>
    </location>
</feature>
<feature type="region of interest" description="Catalytic" evidence="4">
    <location>
        <begin position="500"/>
        <end position="899"/>
    </location>
</feature>
<feature type="region of interest" description="Disordered" evidence="7">
    <location>
        <begin position="1029"/>
        <end position="1322"/>
    </location>
</feature>
<feature type="region of interest" description="Disordered" evidence="7">
    <location>
        <begin position="1341"/>
        <end position="1360"/>
    </location>
</feature>
<feature type="region of interest" description="Disordered" evidence="7">
    <location>
        <begin position="1370"/>
        <end position="1463"/>
    </location>
</feature>
<feature type="region of interest" description="3 X 3 AA repeats of N-P-F" evidence="2">
    <location>
        <begin position="1396"/>
        <end position="1419"/>
    </location>
</feature>
<feature type="region of interest" description="Disordered" evidence="7">
    <location>
        <begin position="1535"/>
        <end position="1573"/>
    </location>
</feature>
<feature type="compositionally biased region" description="Low complexity" evidence="7">
    <location>
        <begin position="1029"/>
        <end position="1054"/>
    </location>
</feature>
<feature type="compositionally biased region" description="Pro residues" evidence="7">
    <location>
        <begin position="1108"/>
        <end position="1130"/>
    </location>
</feature>
<feature type="compositionally biased region" description="Polar residues" evidence="7">
    <location>
        <begin position="1221"/>
        <end position="1234"/>
    </location>
</feature>
<feature type="compositionally biased region" description="Low complexity" evidence="7">
    <location>
        <begin position="1293"/>
        <end position="1304"/>
    </location>
</feature>
<feature type="compositionally biased region" description="Basic and acidic residues" evidence="7">
    <location>
        <begin position="1313"/>
        <end position="1322"/>
    </location>
</feature>
<feature type="compositionally biased region" description="Polar residues" evidence="7">
    <location>
        <begin position="1382"/>
        <end position="1407"/>
    </location>
</feature>
<feature type="compositionally biased region" description="Pro residues" evidence="7">
    <location>
        <begin position="1536"/>
        <end position="1555"/>
    </location>
</feature>
<feature type="modified residue" description="Phosphoserine" evidence="3">
    <location>
        <position position="820"/>
    </location>
</feature>
<feature type="modified residue" description="Phosphoserine" evidence="19 20 22">
    <location>
        <position position="830"/>
    </location>
</feature>
<feature type="modified residue" description="Phosphoserine" evidence="2">
    <location>
        <position position="1053"/>
    </location>
</feature>
<feature type="modified residue" description="Phosphoserine" evidence="3">
    <location>
        <position position="1150"/>
    </location>
</feature>
<feature type="modified residue" description="Phosphoserine" evidence="2">
    <location>
        <position position="1178"/>
    </location>
</feature>
<feature type="modified residue" description="Omega-N-methylarginine" evidence="3">
    <location>
        <position position="1201"/>
    </location>
</feature>
<feature type="modified residue" description="Phosphothreonine" evidence="19 22 23">
    <location>
        <position position="1220"/>
    </location>
</feature>
<feature type="modified residue" description="Phosphoserine" evidence="22">
    <location>
        <position position="1292"/>
    </location>
</feature>
<feature type="modified residue" description="Phosphoserine" evidence="21">
    <location>
        <position position="1318"/>
    </location>
</feature>
<feature type="modified residue" description="Phosphoserine" evidence="22">
    <location>
        <position position="1345"/>
    </location>
</feature>
<feature type="modified residue" description="Phosphothreonine" evidence="3">
    <location>
        <position position="1349"/>
    </location>
</feature>
<feature type="modified residue" description="Phosphoserine" evidence="19">
    <location>
        <position position="1551"/>
    </location>
</feature>
<feature type="modified residue" description="Phosphoserine" evidence="19 22">
    <location>
        <position position="1565"/>
    </location>
</feature>
<feature type="splice variant" id="VSP_035709" description="In isoform 4." evidence="16">
    <original>K</original>
    <variation>KAGK</variation>
    <location>
        <position position="451"/>
    </location>
</feature>
<feature type="splice variant" id="VSP_035710" description="In isoform 4." evidence="16">
    <location>
        <begin position="504"/>
        <end position="511"/>
    </location>
</feature>
<feature type="splice variant" id="VSP_035711" description="In isoform 4." evidence="16">
    <location>
        <begin position="525"/>
        <end position="1573"/>
    </location>
</feature>
<feature type="splice variant" id="VSP_041578" description="In isoform 3." evidence="15">
    <location>
        <begin position="1144"/>
        <end position="1159"/>
    </location>
</feature>
<feature type="splice variant" id="VSP_002682" description="In isoform 2 and isoform 3." evidence="15 17">
    <original>VKTNGI</original>
    <variation>QEQPSG</variation>
    <location>
        <begin position="1306"/>
        <end position="1311"/>
    </location>
</feature>
<feature type="splice variant" id="VSP_002683" description="In isoform 2 and isoform 3." evidence="15 17">
    <location>
        <begin position="1312"/>
        <end position="1573"/>
    </location>
</feature>
<feature type="sequence variant" id="VAR_070905" description="In PARK20; impairs the phosphatase activity of the enzyme toward phosphatidylinositol-3-phosphate and phosphatidylinositol-4-phosphate; dbSNP:rs398122403." evidence="10 11">
    <original>R</original>
    <variation>Q</variation>
    <location>
        <position position="219"/>
    </location>
</feature>
<feature type="sequence variant" id="VAR_047308" description="In dbSNP:rs2254562." evidence="14">
    <original>K</original>
    <variation>R</variation>
    <location>
        <position position="295"/>
    </location>
</feature>
<feature type="sequence variant" id="VAR_078803" description="In PARK20; dbSNP:rs1060499619." evidence="13">
    <original>R</original>
    <variation>P</variation>
    <location>
        <position position="420"/>
    </location>
</feature>
<feature type="sequence variant" id="VAR_078804" description="In DEE53; decreased inositol phosphate phosphatase activity; dbSNP:rs1057524877." evidence="12">
    <original>Y</original>
    <variation>C</variation>
    <location>
        <position position="849"/>
    </location>
</feature>
<feature type="sequence variant" id="VAR_078805" description="In DEE53; likely benign; no effect on inositol phosphate phosphatase activity; dbSNP:rs115683257." evidence="12">
    <original>M</original>
    <variation>I</variation>
    <location>
        <position position="981"/>
    </location>
</feature>
<feature type="sequence variant" id="VAR_078806" description="In DEE53; likely benign; no effect on inositol phosphate phosphatase activity." evidence="12">
    <original>Y</original>
    <variation>S</variation>
    <location>
        <position position="1018"/>
    </location>
</feature>
<feature type="sequence variant" id="VAR_047309" description="In dbSNP:rs9980589.">
    <original>V</original>
    <variation>A</variation>
    <location>
        <position position="1366"/>
    </location>
</feature>
<feature type="sequence variant" id="VAR_070906" description="In PARK20; uncertain significance; the patient also carries a heterozygous PINK1 truncating mutation; dbSNP:rs769099271." evidence="11">
    <original>S</original>
    <variation>R</variation>
    <location>
        <position position="1383"/>
    </location>
</feature>
<feature type="sequence variant" id="VAR_049603" description="In dbSNP:rs2230767.">
    <original>P</original>
    <variation>L</variation>
    <location>
        <position position="1547"/>
    </location>
</feature>
<feature type="sequence conflict" description="In Ref. 1; BAA74933." evidence="18" ref="1">
    <location>
        <begin position="1093"/>
        <end position="1108"/>
    </location>
</feature>
<feature type="sequence conflict" description="In Ref. 1; AAC51922." evidence="18" ref="1">
    <original>V</original>
    <variation>VNT</variation>
    <location>
        <position position="1366"/>
    </location>
</feature>
<feature type="strand" evidence="25">
    <location>
        <begin position="531"/>
        <end position="541"/>
    </location>
</feature>
<feature type="helix" evidence="25">
    <location>
        <begin position="559"/>
        <end position="562"/>
    </location>
</feature>
<feature type="helix" evidence="25">
    <location>
        <begin position="565"/>
        <end position="569"/>
    </location>
</feature>
<feature type="helix" evidence="25">
    <location>
        <begin position="572"/>
        <end position="574"/>
    </location>
</feature>
<feature type="strand" evidence="25">
    <location>
        <begin position="575"/>
        <end position="577"/>
    </location>
</feature>
<feature type="strand" evidence="25">
    <location>
        <begin position="583"/>
        <end position="590"/>
    </location>
</feature>
<feature type="helix" evidence="25">
    <location>
        <begin position="597"/>
        <end position="601"/>
    </location>
</feature>
<feature type="helix" evidence="25">
    <location>
        <begin position="606"/>
        <end position="619"/>
    </location>
</feature>
<feature type="turn" evidence="25">
    <location>
        <begin position="620"/>
        <end position="622"/>
    </location>
</feature>
<feature type="strand" evidence="25">
    <location>
        <begin position="626"/>
        <end position="633"/>
    </location>
</feature>
<feature type="strand" evidence="25">
    <location>
        <begin position="636"/>
        <end position="642"/>
    </location>
</feature>
<feature type="helix" evidence="25">
    <location>
        <begin position="644"/>
        <end position="649"/>
    </location>
</feature>
<feature type="strand" evidence="25">
    <location>
        <begin position="650"/>
        <end position="661"/>
    </location>
</feature>
<feature type="turn" evidence="25">
    <location>
        <begin position="662"/>
        <end position="665"/>
    </location>
</feature>
<feature type="strand" evidence="25">
    <location>
        <begin position="666"/>
        <end position="678"/>
    </location>
</feature>
<feature type="strand" evidence="25">
    <location>
        <begin position="681"/>
        <end position="689"/>
    </location>
</feature>
<feature type="helix" evidence="25">
    <location>
        <begin position="697"/>
        <end position="710"/>
    </location>
</feature>
<feature type="turn" evidence="25">
    <location>
        <begin position="714"/>
        <end position="716"/>
    </location>
</feature>
<feature type="helix" evidence="25">
    <location>
        <begin position="719"/>
        <end position="721"/>
    </location>
</feature>
<feature type="strand" evidence="25">
    <location>
        <begin position="722"/>
        <end position="730"/>
    </location>
</feature>
<feature type="helix" evidence="25">
    <location>
        <begin position="739"/>
        <end position="747"/>
    </location>
</feature>
<feature type="helix" evidence="25">
    <location>
        <begin position="751"/>
        <end position="755"/>
    </location>
</feature>
<feature type="helix" evidence="25">
    <location>
        <begin position="759"/>
        <end position="765"/>
    </location>
</feature>
<feature type="strand" evidence="25">
    <location>
        <begin position="790"/>
        <end position="793"/>
    </location>
</feature>
<feature type="strand" evidence="25">
    <location>
        <begin position="796"/>
        <end position="798"/>
    </location>
</feature>
<feature type="strand" evidence="25">
    <location>
        <begin position="806"/>
        <end position="812"/>
    </location>
</feature>
<feature type="helix" evidence="25">
    <location>
        <begin position="815"/>
        <end position="825"/>
    </location>
</feature>
<feature type="strand" evidence="25">
    <location>
        <begin position="845"/>
        <end position="851"/>
    </location>
</feature>
<feature type="strand" evidence="25">
    <location>
        <begin position="856"/>
        <end position="859"/>
    </location>
</feature>
<feature type="strand" evidence="25">
    <location>
        <begin position="862"/>
        <end position="870"/>
    </location>
</feature>
<feature type="strand" evidence="24">
    <location>
        <begin position="895"/>
        <end position="901"/>
    </location>
</feature>
<feature type="turn" evidence="24">
    <location>
        <begin position="905"/>
        <end position="907"/>
    </location>
</feature>
<feature type="helix" evidence="24">
    <location>
        <begin position="912"/>
        <end position="923"/>
    </location>
</feature>
<feature type="strand" evidence="24">
    <location>
        <begin position="928"/>
        <end position="933"/>
    </location>
</feature>
<feature type="strand" evidence="24">
    <location>
        <begin position="935"/>
        <end position="944"/>
    </location>
</feature>
<feature type="helix" evidence="24">
    <location>
        <begin position="945"/>
        <end position="950"/>
    </location>
</feature>
<feature type="helix" evidence="24">
    <location>
        <begin position="951"/>
        <end position="954"/>
    </location>
</feature>
<feature type="strand" evidence="24">
    <location>
        <begin position="962"/>
        <end position="968"/>
    </location>
</feature>
<proteinExistence type="evidence at protein level"/>
<gene>
    <name type="primary">SYNJ1</name>
    <name type="synonym">KIAA0910</name>
</gene>